<feature type="chain" id="PRO_0000258073" description="Leucyl/phenylalanyl-tRNA--protein transferase">
    <location>
        <begin position="1"/>
        <end position="230"/>
    </location>
</feature>
<gene>
    <name evidence="1" type="primary">aat</name>
    <name type="ordered locus">Pcar_2259</name>
</gene>
<organism>
    <name type="scientific">Syntrophotalea carbinolica (strain DSM 2380 / NBRC 103641 / GraBd1)</name>
    <name type="common">Pelobacter carbinolicus</name>
    <dbReference type="NCBI Taxonomy" id="338963"/>
    <lineage>
        <taxon>Bacteria</taxon>
        <taxon>Pseudomonadati</taxon>
        <taxon>Thermodesulfobacteriota</taxon>
        <taxon>Desulfuromonadia</taxon>
        <taxon>Desulfuromonadales</taxon>
        <taxon>Syntrophotaleaceae</taxon>
        <taxon>Syntrophotalea</taxon>
    </lineage>
</organism>
<name>LFTR_SYNC1</name>
<protein>
    <recommendedName>
        <fullName evidence="1">Leucyl/phenylalanyl-tRNA--protein transferase</fullName>
        <ecNumber evidence="1">2.3.2.6</ecNumber>
    </recommendedName>
    <alternativeName>
        <fullName evidence="1">L/F-transferase</fullName>
    </alternativeName>
    <alternativeName>
        <fullName evidence="1">Leucyltransferase</fullName>
    </alternativeName>
    <alternativeName>
        <fullName evidence="1">Phenyalanyltransferase</fullName>
    </alternativeName>
</protein>
<keyword id="KW-0012">Acyltransferase</keyword>
<keyword id="KW-0963">Cytoplasm</keyword>
<keyword id="KW-1185">Reference proteome</keyword>
<keyword id="KW-0808">Transferase</keyword>
<proteinExistence type="inferred from homology"/>
<accession>Q3A2A9</accession>
<evidence type="ECO:0000255" key="1">
    <source>
        <dbReference type="HAMAP-Rule" id="MF_00688"/>
    </source>
</evidence>
<sequence length="230" mass="25529">MPIYQLIDELVFPPLDHAEPGGLLAVGGDLSPRRLLLAYSMGIFPWFNADDPILWWSPDPRCVLALSAFYLNRSLSKELRRGRYEVTFDKAFSEVIRACARTPRKEGPGTWITGDMLKAYELLHGLGYAHSVEAWYEGCLVGGLYGVALGGCFFGESMFHCMPNASKVAFATLVRHLAMLGYHLIDCQQSSRHLLSMGATEVPRAEFLQLLQNAGVHPSTLPPKGKFPSR</sequence>
<reference key="1">
    <citation type="submission" date="2005-10" db="EMBL/GenBank/DDBJ databases">
        <title>Complete sequence of Pelobacter carbinolicus DSM 2380.</title>
        <authorList>
            <person name="Copeland A."/>
            <person name="Lucas S."/>
            <person name="Lapidus A."/>
            <person name="Barry K."/>
            <person name="Detter J.C."/>
            <person name="Glavina T."/>
            <person name="Hammon N."/>
            <person name="Israni S."/>
            <person name="Pitluck S."/>
            <person name="Chertkov O."/>
            <person name="Schmutz J."/>
            <person name="Larimer F."/>
            <person name="Land M."/>
            <person name="Kyrpides N."/>
            <person name="Ivanova N."/>
            <person name="Richardson P."/>
        </authorList>
    </citation>
    <scope>NUCLEOTIDE SEQUENCE [LARGE SCALE GENOMIC DNA]</scope>
    <source>
        <strain>DSM 2380 / NBRC 103641 / GraBd1</strain>
    </source>
</reference>
<dbReference type="EC" id="2.3.2.6" evidence="1"/>
<dbReference type="EMBL" id="CP000142">
    <property type="protein sequence ID" value="ABA89498.1"/>
    <property type="molecule type" value="Genomic_DNA"/>
</dbReference>
<dbReference type="RefSeq" id="WP_011342015.1">
    <property type="nucleotide sequence ID" value="NC_007498.2"/>
</dbReference>
<dbReference type="SMR" id="Q3A2A9"/>
<dbReference type="STRING" id="338963.Pcar_2259"/>
<dbReference type="KEGG" id="pca:Pcar_2259"/>
<dbReference type="eggNOG" id="COG2360">
    <property type="taxonomic scope" value="Bacteria"/>
</dbReference>
<dbReference type="HOGENOM" id="CLU_075045_0_0_7"/>
<dbReference type="OrthoDB" id="9790282at2"/>
<dbReference type="Proteomes" id="UP000002534">
    <property type="component" value="Chromosome"/>
</dbReference>
<dbReference type="GO" id="GO:0005737">
    <property type="term" value="C:cytoplasm"/>
    <property type="evidence" value="ECO:0007669"/>
    <property type="project" value="UniProtKB-SubCell"/>
</dbReference>
<dbReference type="GO" id="GO:0008914">
    <property type="term" value="F:leucyl-tRNA--protein transferase activity"/>
    <property type="evidence" value="ECO:0007669"/>
    <property type="project" value="UniProtKB-UniRule"/>
</dbReference>
<dbReference type="GO" id="GO:0030163">
    <property type="term" value="P:protein catabolic process"/>
    <property type="evidence" value="ECO:0007669"/>
    <property type="project" value="UniProtKB-UniRule"/>
</dbReference>
<dbReference type="FunFam" id="3.30.70.3550:FF:000001">
    <property type="entry name" value="Leucyl/phenylalanyl-tRNA--protein transferase"/>
    <property type="match status" value="1"/>
</dbReference>
<dbReference type="Gene3D" id="3.40.630.70">
    <property type="entry name" value="Leucyl/phenylalanyl-tRNA-protein transferase, C-terminal domain"/>
    <property type="match status" value="1"/>
</dbReference>
<dbReference type="Gene3D" id="3.30.70.3550">
    <property type="entry name" value="Leucyl/phenylalanyl-tRNA-protein transferase, N-terminal domain"/>
    <property type="match status" value="1"/>
</dbReference>
<dbReference type="HAMAP" id="MF_00688">
    <property type="entry name" value="Leu_Phe_trans"/>
    <property type="match status" value="1"/>
</dbReference>
<dbReference type="InterPro" id="IPR016181">
    <property type="entry name" value="Acyl_CoA_acyltransferase"/>
</dbReference>
<dbReference type="InterPro" id="IPR004616">
    <property type="entry name" value="Leu/Phe-tRNA_Trfase"/>
</dbReference>
<dbReference type="InterPro" id="IPR042203">
    <property type="entry name" value="Leu/Phe-tRNA_Trfase_C"/>
</dbReference>
<dbReference type="InterPro" id="IPR042221">
    <property type="entry name" value="Leu/Phe-tRNA_Trfase_N"/>
</dbReference>
<dbReference type="NCBIfam" id="TIGR00667">
    <property type="entry name" value="aat"/>
    <property type="match status" value="1"/>
</dbReference>
<dbReference type="PANTHER" id="PTHR30098">
    <property type="entry name" value="LEUCYL/PHENYLALANYL-TRNA--PROTEIN TRANSFERASE"/>
    <property type="match status" value="1"/>
</dbReference>
<dbReference type="PANTHER" id="PTHR30098:SF2">
    <property type="entry name" value="LEUCYL_PHENYLALANYL-TRNA--PROTEIN TRANSFERASE"/>
    <property type="match status" value="1"/>
</dbReference>
<dbReference type="Pfam" id="PF03588">
    <property type="entry name" value="Leu_Phe_trans"/>
    <property type="match status" value="1"/>
</dbReference>
<dbReference type="SUPFAM" id="SSF55729">
    <property type="entry name" value="Acyl-CoA N-acyltransferases (Nat)"/>
    <property type="match status" value="1"/>
</dbReference>
<comment type="function">
    <text evidence="1">Functions in the N-end rule pathway of protein degradation where it conjugates Leu, Phe and, less efficiently, Met from aminoacyl-tRNAs to the N-termini of proteins containing an N-terminal arginine or lysine.</text>
</comment>
<comment type="catalytic activity">
    <reaction evidence="1">
        <text>N-terminal L-lysyl-[protein] + L-leucyl-tRNA(Leu) = N-terminal L-leucyl-L-lysyl-[protein] + tRNA(Leu) + H(+)</text>
        <dbReference type="Rhea" id="RHEA:12340"/>
        <dbReference type="Rhea" id="RHEA-COMP:9613"/>
        <dbReference type="Rhea" id="RHEA-COMP:9622"/>
        <dbReference type="Rhea" id="RHEA-COMP:12670"/>
        <dbReference type="Rhea" id="RHEA-COMP:12671"/>
        <dbReference type="ChEBI" id="CHEBI:15378"/>
        <dbReference type="ChEBI" id="CHEBI:65249"/>
        <dbReference type="ChEBI" id="CHEBI:78442"/>
        <dbReference type="ChEBI" id="CHEBI:78494"/>
        <dbReference type="ChEBI" id="CHEBI:133043"/>
        <dbReference type="EC" id="2.3.2.6"/>
    </reaction>
</comment>
<comment type="catalytic activity">
    <reaction evidence="1">
        <text>N-terminal L-arginyl-[protein] + L-leucyl-tRNA(Leu) = N-terminal L-leucyl-L-arginyl-[protein] + tRNA(Leu) + H(+)</text>
        <dbReference type="Rhea" id="RHEA:50416"/>
        <dbReference type="Rhea" id="RHEA-COMP:9613"/>
        <dbReference type="Rhea" id="RHEA-COMP:9622"/>
        <dbReference type="Rhea" id="RHEA-COMP:12672"/>
        <dbReference type="Rhea" id="RHEA-COMP:12673"/>
        <dbReference type="ChEBI" id="CHEBI:15378"/>
        <dbReference type="ChEBI" id="CHEBI:64719"/>
        <dbReference type="ChEBI" id="CHEBI:78442"/>
        <dbReference type="ChEBI" id="CHEBI:78494"/>
        <dbReference type="ChEBI" id="CHEBI:133044"/>
        <dbReference type="EC" id="2.3.2.6"/>
    </reaction>
</comment>
<comment type="catalytic activity">
    <reaction evidence="1">
        <text>L-phenylalanyl-tRNA(Phe) + an N-terminal L-alpha-aminoacyl-[protein] = an N-terminal L-phenylalanyl-L-alpha-aminoacyl-[protein] + tRNA(Phe)</text>
        <dbReference type="Rhea" id="RHEA:43632"/>
        <dbReference type="Rhea" id="RHEA-COMP:9668"/>
        <dbReference type="Rhea" id="RHEA-COMP:9699"/>
        <dbReference type="Rhea" id="RHEA-COMP:10636"/>
        <dbReference type="Rhea" id="RHEA-COMP:10637"/>
        <dbReference type="ChEBI" id="CHEBI:78442"/>
        <dbReference type="ChEBI" id="CHEBI:78531"/>
        <dbReference type="ChEBI" id="CHEBI:78597"/>
        <dbReference type="ChEBI" id="CHEBI:83561"/>
        <dbReference type="EC" id="2.3.2.6"/>
    </reaction>
</comment>
<comment type="subcellular location">
    <subcellularLocation>
        <location evidence="1">Cytoplasm</location>
    </subcellularLocation>
</comment>
<comment type="similarity">
    <text evidence="1">Belongs to the L/F-transferase family.</text>
</comment>